<gene>
    <name evidence="1" type="primary">ispD</name>
    <name type="ordered locus">BMA10229_A3319</name>
</gene>
<comment type="function">
    <text evidence="1">Catalyzes the formation of 4-diphosphocytidyl-2-C-methyl-D-erythritol from CTP and 2-C-methyl-D-erythritol 4-phosphate (MEP).</text>
</comment>
<comment type="catalytic activity">
    <reaction evidence="1">
        <text>2-C-methyl-D-erythritol 4-phosphate + CTP + H(+) = 4-CDP-2-C-methyl-D-erythritol + diphosphate</text>
        <dbReference type="Rhea" id="RHEA:13429"/>
        <dbReference type="ChEBI" id="CHEBI:15378"/>
        <dbReference type="ChEBI" id="CHEBI:33019"/>
        <dbReference type="ChEBI" id="CHEBI:37563"/>
        <dbReference type="ChEBI" id="CHEBI:57823"/>
        <dbReference type="ChEBI" id="CHEBI:58262"/>
        <dbReference type="EC" id="2.7.7.60"/>
    </reaction>
</comment>
<comment type="pathway">
    <text evidence="1">Isoprenoid biosynthesis; isopentenyl diphosphate biosynthesis via DXP pathway; isopentenyl diphosphate from 1-deoxy-D-xylulose 5-phosphate: step 2/6.</text>
</comment>
<comment type="similarity">
    <text evidence="1">Belongs to the IspD/TarI cytidylyltransferase family. IspD subfamily.</text>
</comment>
<keyword id="KW-0414">Isoprene biosynthesis</keyword>
<keyword id="KW-0548">Nucleotidyltransferase</keyword>
<keyword id="KW-0808">Transferase</keyword>
<name>ISPD_BURM9</name>
<evidence type="ECO:0000255" key="1">
    <source>
        <dbReference type="HAMAP-Rule" id="MF_00108"/>
    </source>
</evidence>
<sequence>MTSRLFALIPCAGTGSRSGSALPKQYRTLAGRALLHYTLAAFDACSEFAQTLVVISPDDAHFDARRFAGLRFAVRRCGGASRQASVMNGLIQLAEFGATDADWVLVHDAARPGITPALIRTLIGALKDDPVGGIVALPVADTLKRVPAGGDAIERTESRNGLWQAQTPQMFRIGMLRDAIRRAQLDGHDLTDEASAIEWAGHTPRVVQGSLRNFKVTYPEDFDLAEAILAQPARAS</sequence>
<accession>A2SBD6</accession>
<organism>
    <name type="scientific">Burkholderia mallei (strain NCTC 10229)</name>
    <dbReference type="NCBI Taxonomy" id="412022"/>
    <lineage>
        <taxon>Bacteria</taxon>
        <taxon>Pseudomonadati</taxon>
        <taxon>Pseudomonadota</taxon>
        <taxon>Betaproteobacteria</taxon>
        <taxon>Burkholderiales</taxon>
        <taxon>Burkholderiaceae</taxon>
        <taxon>Burkholderia</taxon>
        <taxon>pseudomallei group</taxon>
    </lineage>
</organism>
<feature type="chain" id="PRO_1000022905" description="2-C-methyl-D-erythritol 4-phosphate cytidylyltransferase">
    <location>
        <begin position="1"/>
        <end position="236"/>
    </location>
</feature>
<feature type="site" description="Transition state stabilizer" evidence="1">
    <location>
        <position position="17"/>
    </location>
</feature>
<feature type="site" description="Transition state stabilizer" evidence="1">
    <location>
        <position position="24"/>
    </location>
</feature>
<feature type="site" description="Positions MEP for the nucleophilic attack" evidence="1">
    <location>
        <position position="159"/>
    </location>
</feature>
<feature type="site" description="Positions MEP for the nucleophilic attack" evidence="1">
    <location>
        <position position="215"/>
    </location>
</feature>
<protein>
    <recommendedName>
        <fullName evidence="1">2-C-methyl-D-erythritol 4-phosphate cytidylyltransferase</fullName>
        <ecNumber evidence="1">2.7.7.60</ecNumber>
    </recommendedName>
    <alternativeName>
        <fullName evidence="1">4-diphosphocytidyl-2C-methyl-D-erythritol synthase</fullName>
    </alternativeName>
    <alternativeName>
        <fullName evidence="1">MEP cytidylyltransferase</fullName>
        <shortName evidence="1">MCT</shortName>
    </alternativeName>
</protein>
<reference key="1">
    <citation type="journal article" date="2010" name="Genome Biol. Evol.">
        <title>Continuing evolution of Burkholderia mallei through genome reduction and large-scale rearrangements.</title>
        <authorList>
            <person name="Losada L."/>
            <person name="Ronning C.M."/>
            <person name="DeShazer D."/>
            <person name="Woods D."/>
            <person name="Fedorova N."/>
            <person name="Kim H.S."/>
            <person name="Shabalina S.A."/>
            <person name="Pearson T.R."/>
            <person name="Brinkac L."/>
            <person name="Tan P."/>
            <person name="Nandi T."/>
            <person name="Crabtree J."/>
            <person name="Badger J."/>
            <person name="Beckstrom-Sternberg S."/>
            <person name="Saqib M."/>
            <person name="Schutzer S.E."/>
            <person name="Keim P."/>
            <person name="Nierman W.C."/>
        </authorList>
    </citation>
    <scope>NUCLEOTIDE SEQUENCE [LARGE SCALE GENOMIC DNA]</scope>
    <source>
        <strain>NCTC 10229</strain>
    </source>
</reference>
<dbReference type="EC" id="2.7.7.60" evidence="1"/>
<dbReference type="EMBL" id="CP000546">
    <property type="protein sequence ID" value="ABN01114.1"/>
    <property type="molecule type" value="Genomic_DNA"/>
</dbReference>
<dbReference type="RefSeq" id="WP_004191584.1">
    <property type="nucleotide sequence ID" value="NC_008836.1"/>
</dbReference>
<dbReference type="SMR" id="A2SBD6"/>
<dbReference type="GeneID" id="93060628"/>
<dbReference type="KEGG" id="bml:BMA10229_A3319"/>
<dbReference type="HOGENOM" id="CLU_061281_3_0_4"/>
<dbReference type="UniPathway" id="UPA00056">
    <property type="reaction ID" value="UER00093"/>
</dbReference>
<dbReference type="Proteomes" id="UP000002283">
    <property type="component" value="Chromosome I"/>
</dbReference>
<dbReference type="GO" id="GO:0050518">
    <property type="term" value="F:2-C-methyl-D-erythritol 4-phosphate cytidylyltransferase activity"/>
    <property type="evidence" value="ECO:0007669"/>
    <property type="project" value="UniProtKB-UniRule"/>
</dbReference>
<dbReference type="GO" id="GO:0019288">
    <property type="term" value="P:isopentenyl diphosphate biosynthetic process, methylerythritol 4-phosphate pathway"/>
    <property type="evidence" value="ECO:0007669"/>
    <property type="project" value="UniProtKB-UniRule"/>
</dbReference>
<dbReference type="CDD" id="cd02516">
    <property type="entry name" value="CDP-ME_synthetase"/>
    <property type="match status" value="1"/>
</dbReference>
<dbReference type="FunFam" id="3.90.550.10:FF:000003">
    <property type="entry name" value="2-C-methyl-D-erythritol 4-phosphate cytidylyltransferase"/>
    <property type="match status" value="1"/>
</dbReference>
<dbReference type="Gene3D" id="3.90.550.10">
    <property type="entry name" value="Spore Coat Polysaccharide Biosynthesis Protein SpsA, Chain A"/>
    <property type="match status" value="1"/>
</dbReference>
<dbReference type="HAMAP" id="MF_00108">
    <property type="entry name" value="IspD"/>
    <property type="match status" value="1"/>
</dbReference>
<dbReference type="InterPro" id="IPR001228">
    <property type="entry name" value="IspD"/>
</dbReference>
<dbReference type="InterPro" id="IPR034683">
    <property type="entry name" value="IspD/TarI"/>
</dbReference>
<dbReference type="InterPro" id="IPR050088">
    <property type="entry name" value="IspD/TarI_cytidylyltransf_bact"/>
</dbReference>
<dbReference type="InterPro" id="IPR018294">
    <property type="entry name" value="ISPD_synthase_CS"/>
</dbReference>
<dbReference type="InterPro" id="IPR029044">
    <property type="entry name" value="Nucleotide-diphossugar_trans"/>
</dbReference>
<dbReference type="NCBIfam" id="TIGR00453">
    <property type="entry name" value="ispD"/>
    <property type="match status" value="1"/>
</dbReference>
<dbReference type="PANTHER" id="PTHR32125">
    <property type="entry name" value="2-C-METHYL-D-ERYTHRITOL 4-PHOSPHATE CYTIDYLYLTRANSFERASE, CHLOROPLASTIC"/>
    <property type="match status" value="1"/>
</dbReference>
<dbReference type="PANTHER" id="PTHR32125:SF4">
    <property type="entry name" value="2-C-METHYL-D-ERYTHRITOL 4-PHOSPHATE CYTIDYLYLTRANSFERASE, CHLOROPLASTIC"/>
    <property type="match status" value="1"/>
</dbReference>
<dbReference type="Pfam" id="PF01128">
    <property type="entry name" value="IspD"/>
    <property type="match status" value="1"/>
</dbReference>
<dbReference type="SUPFAM" id="SSF53448">
    <property type="entry name" value="Nucleotide-diphospho-sugar transferases"/>
    <property type="match status" value="1"/>
</dbReference>
<dbReference type="PROSITE" id="PS01295">
    <property type="entry name" value="ISPD"/>
    <property type="match status" value="1"/>
</dbReference>
<proteinExistence type="inferred from homology"/>